<accession>P44336</accession>
<reference key="1">
    <citation type="journal article" date="1995" name="Science">
        <title>Whole-genome random sequencing and assembly of Haemophilus influenzae Rd.</title>
        <authorList>
            <person name="Fleischmann R.D."/>
            <person name="Adams M.D."/>
            <person name="White O."/>
            <person name="Clayton R.A."/>
            <person name="Kirkness E.F."/>
            <person name="Kerlavage A.R."/>
            <person name="Bult C.J."/>
            <person name="Tomb J.-F."/>
            <person name="Dougherty B.A."/>
            <person name="Merrick J.M."/>
            <person name="McKenney K."/>
            <person name="Sutton G.G."/>
            <person name="FitzHugh W."/>
            <person name="Fields C.A."/>
            <person name="Gocayne J.D."/>
            <person name="Scott J.D."/>
            <person name="Shirley R."/>
            <person name="Liu L.-I."/>
            <person name="Glodek A."/>
            <person name="Kelley J.M."/>
            <person name="Weidman J.F."/>
            <person name="Phillips C.A."/>
            <person name="Spriggs T."/>
            <person name="Hedblom E."/>
            <person name="Cotton M.D."/>
            <person name="Utterback T.R."/>
            <person name="Hanna M.C."/>
            <person name="Nguyen D.T."/>
            <person name="Saudek D.M."/>
            <person name="Brandon R.C."/>
            <person name="Fine L.D."/>
            <person name="Fritchman J.L."/>
            <person name="Fuhrmann J.L."/>
            <person name="Geoghagen N.S.M."/>
            <person name="Gnehm C.L."/>
            <person name="McDonald L.A."/>
            <person name="Small K.V."/>
            <person name="Fraser C.M."/>
            <person name="Smith H.O."/>
            <person name="Venter J.C."/>
        </authorList>
    </citation>
    <scope>NUCLEOTIDE SEQUENCE [LARGE SCALE GENOMIC DNA]</scope>
    <source>
        <strain>ATCC 51907 / DSM 11121 / KW20 / Rd</strain>
    </source>
</reference>
<protein>
    <recommendedName>
        <fullName evidence="1">Phosphoserine aminotransferase</fullName>
        <ecNumber evidence="1">2.6.1.52</ecNumber>
    </recommendedName>
    <alternativeName>
        <fullName evidence="1">Phosphohydroxythreonine aminotransferase</fullName>
        <shortName evidence="1">PSAT</shortName>
    </alternativeName>
</protein>
<feature type="chain" id="PRO_0000150174" description="Phosphoserine aminotransferase">
    <location>
        <begin position="1"/>
        <end position="362"/>
    </location>
</feature>
<feature type="binding site" evidence="1">
    <location>
        <position position="42"/>
    </location>
    <ligand>
        <name>L-glutamate</name>
        <dbReference type="ChEBI" id="CHEBI:29985"/>
    </ligand>
</feature>
<feature type="binding site" evidence="1">
    <location>
        <begin position="76"/>
        <end position="77"/>
    </location>
    <ligand>
        <name>pyridoxal 5'-phosphate</name>
        <dbReference type="ChEBI" id="CHEBI:597326"/>
    </ligand>
</feature>
<feature type="binding site" evidence="1">
    <location>
        <position position="102"/>
    </location>
    <ligand>
        <name>pyridoxal 5'-phosphate</name>
        <dbReference type="ChEBI" id="CHEBI:597326"/>
    </ligand>
</feature>
<feature type="binding site" evidence="1">
    <location>
        <position position="152"/>
    </location>
    <ligand>
        <name>pyridoxal 5'-phosphate</name>
        <dbReference type="ChEBI" id="CHEBI:597326"/>
    </ligand>
</feature>
<feature type="binding site" evidence="1">
    <location>
        <position position="172"/>
    </location>
    <ligand>
        <name>pyridoxal 5'-phosphate</name>
        <dbReference type="ChEBI" id="CHEBI:597326"/>
    </ligand>
</feature>
<feature type="binding site" evidence="1">
    <location>
        <position position="195"/>
    </location>
    <ligand>
        <name>pyridoxal 5'-phosphate</name>
        <dbReference type="ChEBI" id="CHEBI:597326"/>
    </ligand>
</feature>
<feature type="binding site" evidence="1">
    <location>
        <begin position="237"/>
        <end position="238"/>
    </location>
    <ligand>
        <name>pyridoxal 5'-phosphate</name>
        <dbReference type="ChEBI" id="CHEBI:597326"/>
    </ligand>
</feature>
<feature type="modified residue" description="N6-(pyridoxal phosphate)lysine" evidence="1">
    <location>
        <position position="196"/>
    </location>
</feature>
<comment type="function">
    <text evidence="1">Catalyzes the reversible conversion of 3-phosphohydroxypyruvate to phosphoserine and of 3-hydroxy-2-oxo-4-phosphonooxybutanoate to phosphohydroxythreonine.</text>
</comment>
<comment type="catalytic activity">
    <reaction evidence="1">
        <text>O-phospho-L-serine + 2-oxoglutarate = 3-phosphooxypyruvate + L-glutamate</text>
        <dbReference type="Rhea" id="RHEA:14329"/>
        <dbReference type="ChEBI" id="CHEBI:16810"/>
        <dbReference type="ChEBI" id="CHEBI:18110"/>
        <dbReference type="ChEBI" id="CHEBI:29985"/>
        <dbReference type="ChEBI" id="CHEBI:57524"/>
        <dbReference type="EC" id="2.6.1.52"/>
    </reaction>
</comment>
<comment type="catalytic activity">
    <reaction evidence="1">
        <text>4-(phosphooxy)-L-threonine + 2-oxoglutarate = (R)-3-hydroxy-2-oxo-4-phosphooxybutanoate + L-glutamate</text>
        <dbReference type="Rhea" id="RHEA:16573"/>
        <dbReference type="ChEBI" id="CHEBI:16810"/>
        <dbReference type="ChEBI" id="CHEBI:29985"/>
        <dbReference type="ChEBI" id="CHEBI:58452"/>
        <dbReference type="ChEBI" id="CHEBI:58538"/>
        <dbReference type="EC" id="2.6.1.52"/>
    </reaction>
</comment>
<comment type="cofactor">
    <cofactor evidence="1">
        <name>pyridoxal 5'-phosphate</name>
        <dbReference type="ChEBI" id="CHEBI:597326"/>
    </cofactor>
    <text evidence="1">Binds 1 pyridoxal phosphate per subunit.</text>
</comment>
<comment type="pathway">
    <text evidence="1">Amino-acid biosynthesis; L-serine biosynthesis; L-serine from 3-phospho-D-glycerate: step 2/3.</text>
</comment>
<comment type="pathway">
    <text evidence="1">Cofactor biosynthesis; pyridoxine 5'-phosphate biosynthesis; pyridoxine 5'-phosphate from D-erythrose 4-phosphate: step 3/5.</text>
</comment>
<comment type="subunit">
    <text evidence="1">Homodimer.</text>
</comment>
<comment type="subcellular location">
    <subcellularLocation>
        <location evidence="1">Cytoplasm</location>
    </subcellularLocation>
</comment>
<comment type="similarity">
    <text evidence="1">Belongs to the class-V pyridoxal-phosphate-dependent aminotransferase family. SerC subfamily.</text>
</comment>
<organism>
    <name type="scientific">Haemophilus influenzae (strain ATCC 51907 / DSM 11121 / KW20 / Rd)</name>
    <dbReference type="NCBI Taxonomy" id="71421"/>
    <lineage>
        <taxon>Bacteria</taxon>
        <taxon>Pseudomonadati</taxon>
        <taxon>Pseudomonadota</taxon>
        <taxon>Gammaproteobacteria</taxon>
        <taxon>Pasteurellales</taxon>
        <taxon>Pasteurellaceae</taxon>
        <taxon>Haemophilus</taxon>
    </lineage>
</organism>
<name>SERC_HAEIN</name>
<sequence length="362" mass="40313">MSQVFNFSAGPAMIFPEVLQKAQNELINWLNQGVSVMEVSHRGKYFMELVTQAEKDLREVYNIPDNYRTLFLQGGARGQFATIPMNLIGKKGKALYLNSGHWSATAAKEARNFAEIDEITIVENGEQTRITDLDFSHIADQYDYVHYCPNETISGVEIFDVPNVGNAVLVADMSSNILSRQIDISKFGVIYAGAQKNLGPAGITLVIIRDDLIGNARKETPSIWNYATQRDADSMINTPPTFAWYLCSLVFKHLKEIGGLEIIEKRNALKAQTLYDYIDSSKLYRNVVAKENRSTMNVTFITGNPELDAKFVAESTAAGLQALKGHKVLGGMRASIYNAMSQNGVEALISFMKKFETENLPQ</sequence>
<proteinExistence type="inferred from homology"/>
<gene>
    <name evidence="1" type="primary">serC</name>
    <name type="ordered locus">HI_1167</name>
</gene>
<evidence type="ECO:0000255" key="1">
    <source>
        <dbReference type="HAMAP-Rule" id="MF_00160"/>
    </source>
</evidence>
<dbReference type="EC" id="2.6.1.52" evidence="1"/>
<dbReference type="EMBL" id="L42023">
    <property type="protein sequence ID" value="AAC22822.1"/>
    <property type="molecule type" value="Genomic_DNA"/>
</dbReference>
<dbReference type="PIR" id="E64187">
    <property type="entry name" value="E64187"/>
</dbReference>
<dbReference type="RefSeq" id="NP_439325.1">
    <property type="nucleotide sequence ID" value="NC_000907.1"/>
</dbReference>
<dbReference type="SMR" id="P44336"/>
<dbReference type="STRING" id="71421.HI_1167"/>
<dbReference type="EnsemblBacteria" id="AAC22822">
    <property type="protein sequence ID" value="AAC22822"/>
    <property type="gene ID" value="HI_1167"/>
</dbReference>
<dbReference type="KEGG" id="hin:HI_1167"/>
<dbReference type="PATRIC" id="fig|71421.8.peg.1219"/>
<dbReference type="eggNOG" id="COG1932">
    <property type="taxonomic scope" value="Bacteria"/>
</dbReference>
<dbReference type="HOGENOM" id="CLU_034866_0_2_6"/>
<dbReference type="OrthoDB" id="9809412at2"/>
<dbReference type="PhylomeDB" id="P44336"/>
<dbReference type="BioCyc" id="HINF71421:G1GJ1-1201-MONOMER"/>
<dbReference type="UniPathway" id="UPA00135">
    <property type="reaction ID" value="UER00197"/>
</dbReference>
<dbReference type="UniPathway" id="UPA00244">
    <property type="reaction ID" value="UER00311"/>
</dbReference>
<dbReference type="Proteomes" id="UP000000579">
    <property type="component" value="Chromosome"/>
</dbReference>
<dbReference type="GO" id="GO:0005737">
    <property type="term" value="C:cytoplasm"/>
    <property type="evidence" value="ECO:0000318"/>
    <property type="project" value="GO_Central"/>
</dbReference>
<dbReference type="GO" id="GO:0004648">
    <property type="term" value="F:O-phospho-L-serine:2-oxoglutarate aminotransferase activity"/>
    <property type="evidence" value="ECO:0000318"/>
    <property type="project" value="GO_Central"/>
</dbReference>
<dbReference type="GO" id="GO:0030170">
    <property type="term" value="F:pyridoxal phosphate binding"/>
    <property type="evidence" value="ECO:0000318"/>
    <property type="project" value="GO_Central"/>
</dbReference>
<dbReference type="GO" id="GO:0006564">
    <property type="term" value="P:L-serine biosynthetic process"/>
    <property type="evidence" value="ECO:0000318"/>
    <property type="project" value="GO_Central"/>
</dbReference>
<dbReference type="GO" id="GO:0008615">
    <property type="term" value="P:pyridoxine biosynthetic process"/>
    <property type="evidence" value="ECO:0007669"/>
    <property type="project" value="UniProtKB-UniRule"/>
</dbReference>
<dbReference type="CDD" id="cd00611">
    <property type="entry name" value="PSAT_like"/>
    <property type="match status" value="1"/>
</dbReference>
<dbReference type="FunFam" id="3.40.640.10:FF:000010">
    <property type="entry name" value="Phosphoserine aminotransferase"/>
    <property type="match status" value="1"/>
</dbReference>
<dbReference type="FunFam" id="3.90.1150.10:FF:000006">
    <property type="entry name" value="Phosphoserine aminotransferase"/>
    <property type="match status" value="1"/>
</dbReference>
<dbReference type="Gene3D" id="3.90.1150.10">
    <property type="entry name" value="Aspartate Aminotransferase, domain 1"/>
    <property type="match status" value="1"/>
</dbReference>
<dbReference type="Gene3D" id="3.40.640.10">
    <property type="entry name" value="Type I PLP-dependent aspartate aminotransferase-like (Major domain)"/>
    <property type="match status" value="1"/>
</dbReference>
<dbReference type="HAMAP" id="MF_00160">
    <property type="entry name" value="SerC_aminotrans_5"/>
    <property type="match status" value="1"/>
</dbReference>
<dbReference type="InterPro" id="IPR000192">
    <property type="entry name" value="Aminotrans_V_dom"/>
</dbReference>
<dbReference type="InterPro" id="IPR020578">
    <property type="entry name" value="Aminotrans_V_PyrdxlP_BS"/>
</dbReference>
<dbReference type="InterPro" id="IPR022278">
    <property type="entry name" value="Pser_aminoTfrase"/>
</dbReference>
<dbReference type="InterPro" id="IPR015424">
    <property type="entry name" value="PyrdxlP-dep_Trfase"/>
</dbReference>
<dbReference type="InterPro" id="IPR015421">
    <property type="entry name" value="PyrdxlP-dep_Trfase_major"/>
</dbReference>
<dbReference type="InterPro" id="IPR015422">
    <property type="entry name" value="PyrdxlP-dep_Trfase_small"/>
</dbReference>
<dbReference type="NCBIfam" id="NF003764">
    <property type="entry name" value="PRK05355.1"/>
    <property type="match status" value="1"/>
</dbReference>
<dbReference type="NCBIfam" id="TIGR01364">
    <property type="entry name" value="serC_1"/>
    <property type="match status" value="1"/>
</dbReference>
<dbReference type="PANTHER" id="PTHR43247">
    <property type="entry name" value="PHOSPHOSERINE AMINOTRANSFERASE"/>
    <property type="match status" value="1"/>
</dbReference>
<dbReference type="PANTHER" id="PTHR43247:SF1">
    <property type="entry name" value="PHOSPHOSERINE AMINOTRANSFERASE"/>
    <property type="match status" value="1"/>
</dbReference>
<dbReference type="Pfam" id="PF00266">
    <property type="entry name" value="Aminotran_5"/>
    <property type="match status" value="1"/>
</dbReference>
<dbReference type="PIRSF" id="PIRSF000525">
    <property type="entry name" value="SerC"/>
    <property type="match status" value="1"/>
</dbReference>
<dbReference type="SUPFAM" id="SSF53383">
    <property type="entry name" value="PLP-dependent transferases"/>
    <property type="match status" value="1"/>
</dbReference>
<dbReference type="PROSITE" id="PS00595">
    <property type="entry name" value="AA_TRANSFER_CLASS_5"/>
    <property type="match status" value="1"/>
</dbReference>
<keyword id="KW-0028">Amino-acid biosynthesis</keyword>
<keyword id="KW-0032">Aminotransferase</keyword>
<keyword id="KW-0963">Cytoplasm</keyword>
<keyword id="KW-0663">Pyridoxal phosphate</keyword>
<keyword id="KW-0664">Pyridoxine biosynthesis</keyword>
<keyword id="KW-1185">Reference proteome</keyword>
<keyword id="KW-0718">Serine biosynthesis</keyword>
<keyword id="KW-0808">Transferase</keyword>